<dbReference type="EC" id="3.1.3.16" evidence="3"/>
<dbReference type="EMBL" id="BC102424">
    <property type="protein sequence ID" value="AAI02425.1"/>
    <property type="molecule type" value="mRNA"/>
</dbReference>
<dbReference type="RefSeq" id="NP_001030393.1">
    <property type="nucleotide sequence ID" value="NM_001035316.2"/>
</dbReference>
<dbReference type="SMR" id="Q3T0E7"/>
<dbReference type="BioGRID" id="172796">
    <property type="interactions" value="3"/>
</dbReference>
<dbReference type="FunCoup" id="Q3T0E7">
    <property type="interactions" value="3107"/>
</dbReference>
<dbReference type="IntAct" id="Q3T0E7">
    <property type="interactions" value="3"/>
</dbReference>
<dbReference type="STRING" id="9913.ENSBTAP00000016111"/>
<dbReference type="PaxDb" id="9913-ENSBTAP00000054151"/>
<dbReference type="Ensembl" id="ENSBTAT00000016111.7">
    <property type="protein sequence ID" value="ENSBTAP00000016111.6"/>
    <property type="gene ID" value="ENSBTAG00000012146.7"/>
</dbReference>
<dbReference type="GeneID" id="516175"/>
<dbReference type="KEGG" id="bta:516175"/>
<dbReference type="CTD" id="5499"/>
<dbReference type="VEuPathDB" id="HostDB:ENSBTAG00000012146"/>
<dbReference type="VGNC" id="VGNC:106874">
    <property type="gene designation" value="PPP1CA"/>
</dbReference>
<dbReference type="eggNOG" id="KOG0374">
    <property type="taxonomic scope" value="Eukaryota"/>
</dbReference>
<dbReference type="GeneTree" id="ENSGT00940000153472"/>
<dbReference type="InParanoid" id="Q3T0E7"/>
<dbReference type="OMA" id="YLVMESR"/>
<dbReference type="OrthoDB" id="1930084at2759"/>
<dbReference type="Reactome" id="R-BTA-180024">
    <property type="pathway name" value="DARPP-32 events"/>
</dbReference>
<dbReference type="CD-CODE" id="D7FE2080">
    <property type="entry name" value="Nucleolus"/>
</dbReference>
<dbReference type="Proteomes" id="UP000009136">
    <property type="component" value="Chromosome 29"/>
</dbReference>
<dbReference type="Bgee" id="ENSBTAG00000012146">
    <property type="expression patterns" value="Expressed in esophagus and 106 other cell types or tissues"/>
</dbReference>
<dbReference type="GO" id="GO:0005912">
    <property type="term" value="C:adherens junction"/>
    <property type="evidence" value="ECO:0007669"/>
    <property type="project" value="Ensembl"/>
</dbReference>
<dbReference type="GO" id="GO:0000781">
    <property type="term" value="C:chromosome, telomeric region"/>
    <property type="evidence" value="ECO:0007669"/>
    <property type="project" value="Ensembl"/>
</dbReference>
<dbReference type="GO" id="GO:0005737">
    <property type="term" value="C:cytoplasm"/>
    <property type="evidence" value="ECO:0000318"/>
    <property type="project" value="GO_Central"/>
</dbReference>
<dbReference type="GO" id="GO:0005829">
    <property type="term" value="C:cytosol"/>
    <property type="evidence" value="ECO:0007669"/>
    <property type="project" value="Ensembl"/>
</dbReference>
<dbReference type="GO" id="GO:0005730">
    <property type="term" value="C:nucleolus"/>
    <property type="evidence" value="ECO:0007669"/>
    <property type="project" value="UniProtKB-SubCell"/>
</dbReference>
<dbReference type="GO" id="GO:0005654">
    <property type="term" value="C:nucleoplasm"/>
    <property type="evidence" value="ECO:0007669"/>
    <property type="project" value="UniProtKB-SubCell"/>
</dbReference>
<dbReference type="GO" id="GO:0005634">
    <property type="term" value="C:nucleus"/>
    <property type="evidence" value="ECO:0000318"/>
    <property type="project" value="GO_Central"/>
</dbReference>
<dbReference type="GO" id="GO:0005886">
    <property type="term" value="C:plasma membrane"/>
    <property type="evidence" value="ECO:0007669"/>
    <property type="project" value="Ensembl"/>
</dbReference>
<dbReference type="GO" id="GO:0072357">
    <property type="term" value="C:PTW/PP1 phosphatase complex"/>
    <property type="evidence" value="ECO:0000250"/>
    <property type="project" value="UniProtKB"/>
</dbReference>
<dbReference type="GO" id="GO:0098641">
    <property type="term" value="F:cadherin binding involved in cell-cell adhesion"/>
    <property type="evidence" value="ECO:0007669"/>
    <property type="project" value="Ensembl"/>
</dbReference>
<dbReference type="GO" id="GO:0005506">
    <property type="term" value="F:iron ion binding"/>
    <property type="evidence" value="ECO:0000250"/>
    <property type="project" value="UniProtKB"/>
</dbReference>
<dbReference type="GO" id="GO:0016791">
    <property type="term" value="F:phosphatase activity"/>
    <property type="evidence" value="ECO:0000250"/>
    <property type="project" value="UniProtKB"/>
</dbReference>
<dbReference type="GO" id="GO:0004722">
    <property type="term" value="F:protein serine/threonine phosphatase activity"/>
    <property type="evidence" value="ECO:0000250"/>
    <property type="project" value="UniProtKB"/>
</dbReference>
<dbReference type="GO" id="GO:0180007">
    <property type="term" value="F:RNA polymerase II CTD heptapeptide repeat S5 phosphatase activity"/>
    <property type="evidence" value="ECO:0000250"/>
    <property type="project" value="UniProtKB"/>
</dbReference>
<dbReference type="GO" id="GO:0046914">
    <property type="term" value="F:transition metal ion binding"/>
    <property type="evidence" value="ECO:0000250"/>
    <property type="project" value="UniProtKB"/>
</dbReference>
<dbReference type="GO" id="GO:0048754">
    <property type="term" value="P:branching morphogenesis of an epithelial tube"/>
    <property type="evidence" value="ECO:0007669"/>
    <property type="project" value="Ensembl"/>
</dbReference>
<dbReference type="GO" id="GO:0051301">
    <property type="term" value="P:cell division"/>
    <property type="evidence" value="ECO:0007669"/>
    <property type="project" value="UniProtKB-KW"/>
</dbReference>
<dbReference type="GO" id="GO:0032922">
    <property type="term" value="P:circadian regulation of gene expression"/>
    <property type="evidence" value="ECO:0000250"/>
    <property type="project" value="UniProtKB"/>
</dbReference>
<dbReference type="GO" id="GO:0043153">
    <property type="term" value="P:entrainment of circadian clock by photoperiod"/>
    <property type="evidence" value="ECO:0000250"/>
    <property type="project" value="UniProtKB"/>
</dbReference>
<dbReference type="GO" id="GO:0005977">
    <property type="term" value="P:glycogen metabolic process"/>
    <property type="evidence" value="ECO:0007669"/>
    <property type="project" value="UniProtKB-KW"/>
</dbReference>
<dbReference type="GO" id="GO:0030324">
    <property type="term" value="P:lung development"/>
    <property type="evidence" value="ECO:0007669"/>
    <property type="project" value="Ensembl"/>
</dbReference>
<dbReference type="GO" id="GO:0034244">
    <property type="term" value="P:negative regulation of transcription elongation by RNA polymerase II"/>
    <property type="evidence" value="ECO:0000250"/>
    <property type="project" value="UniProtKB"/>
</dbReference>
<dbReference type="GO" id="GO:2001241">
    <property type="term" value="P:positive regulation of extrinsic apoptotic signaling pathway in absence of ligand"/>
    <property type="evidence" value="ECO:0007669"/>
    <property type="project" value="Ensembl"/>
</dbReference>
<dbReference type="GO" id="GO:0045725">
    <property type="term" value="P:positive regulation of glycogen biosynthetic process"/>
    <property type="evidence" value="ECO:0007669"/>
    <property type="project" value="Ensembl"/>
</dbReference>
<dbReference type="GO" id="GO:2000806">
    <property type="term" value="P:positive regulation of termination of RNA polymerase II transcription, poly(A)-coupled"/>
    <property type="evidence" value="ECO:0007669"/>
    <property type="project" value="Ensembl"/>
</dbReference>
<dbReference type="GO" id="GO:0032968">
    <property type="term" value="P:positive regulation of transcription elongation by RNA polymerase II"/>
    <property type="evidence" value="ECO:0000250"/>
    <property type="project" value="UniProtKB"/>
</dbReference>
<dbReference type="GO" id="GO:0006470">
    <property type="term" value="P:protein dephosphorylation"/>
    <property type="evidence" value="ECO:0000250"/>
    <property type="project" value="UniProtKB"/>
</dbReference>
<dbReference type="GO" id="GO:0050821">
    <property type="term" value="P:protein stabilization"/>
    <property type="evidence" value="ECO:0007669"/>
    <property type="project" value="Ensembl"/>
</dbReference>
<dbReference type="GO" id="GO:0042752">
    <property type="term" value="P:regulation of circadian rhythm"/>
    <property type="evidence" value="ECO:0000250"/>
    <property type="project" value="UniProtKB"/>
</dbReference>
<dbReference type="GO" id="GO:0001111">
    <property type="term" value="P:RNA polymerase II promoter clearance"/>
    <property type="evidence" value="ECO:0000250"/>
    <property type="project" value="UniProtKB"/>
</dbReference>
<dbReference type="GO" id="GO:0043247">
    <property type="term" value="P:telomere maintenance in response to DNA damage"/>
    <property type="evidence" value="ECO:0007669"/>
    <property type="project" value="Ensembl"/>
</dbReference>
<dbReference type="CDD" id="cd07414">
    <property type="entry name" value="MPP_PP1_PPKL"/>
    <property type="match status" value="1"/>
</dbReference>
<dbReference type="FunFam" id="3.60.21.10:FF:000004">
    <property type="entry name" value="Serine/threonine-protein phosphatase"/>
    <property type="match status" value="1"/>
</dbReference>
<dbReference type="Gene3D" id="3.60.21.10">
    <property type="match status" value="1"/>
</dbReference>
<dbReference type="InterPro" id="IPR004843">
    <property type="entry name" value="Calcineurin-like_PHP_ApaH"/>
</dbReference>
<dbReference type="InterPro" id="IPR029052">
    <property type="entry name" value="Metallo-depent_PP-like"/>
</dbReference>
<dbReference type="InterPro" id="IPR050341">
    <property type="entry name" value="PP1_catalytic_subunit"/>
</dbReference>
<dbReference type="InterPro" id="IPR006186">
    <property type="entry name" value="Ser/Thr-sp_prot-phosphatase"/>
</dbReference>
<dbReference type="InterPro" id="IPR031675">
    <property type="entry name" value="STPPase_N"/>
</dbReference>
<dbReference type="PANTHER" id="PTHR11668">
    <property type="entry name" value="SERINE/THREONINE PROTEIN PHOSPHATASE"/>
    <property type="match status" value="1"/>
</dbReference>
<dbReference type="PANTHER" id="PTHR11668:SF377">
    <property type="entry name" value="SERINE_THREONINE-PROTEIN PHOSPHATASE PP1-ALPHA CATALYTIC SUBUNIT"/>
    <property type="match status" value="1"/>
</dbReference>
<dbReference type="Pfam" id="PF00149">
    <property type="entry name" value="Metallophos"/>
    <property type="match status" value="1"/>
</dbReference>
<dbReference type="Pfam" id="PF16891">
    <property type="entry name" value="STPPase_N"/>
    <property type="match status" value="1"/>
</dbReference>
<dbReference type="PRINTS" id="PR00114">
    <property type="entry name" value="STPHPHTASE"/>
</dbReference>
<dbReference type="SMART" id="SM00156">
    <property type="entry name" value="PP2Ac"/>
    <property type="match status" value="1"/>
</dbReference>
<dbReference type="SUPFAM" id="SSF56300">
    <property type="entry name" value="Metallo-dependent phosphatases"/>
    <property type="match status" value="1"/>
</dbReference>
<dbReference type="PROSITE" id="PS00125">
    <property type="entry name" value="SER_THR_PHOSPHATASE"/>
    <property type="match status" value="1"/>
</dbReference>
<protein>
    <recommendedName>
        <fullName>Serine/threonine-protein phosphatase PP1-alpha catalytic subunit</fullName>
        <shortName>PP-1A</shortName>
        <ecNumber evidence="3">3.1.3.16</ecNumber>
    </recommendedName>
</protein>
<name>PP1A_BOVIN</name>
<organism>
    <name type="scientific">Bos taurus</name>
    <name type="common">Bovine</name>
    <dbReference type="NCBI Taxonomy" id="9913"/>
    <lineage>
        <taxon>Eukaryota</taxon>
        <taxon>Metazoa</taxon>
        <taxon>Chordata</taxon>
        <taxon>Craniata</taxon>
        <taxon>Vertebrata</taxon>
        <taxon>Euteleostomi</taxon>
        <taxon>Mammalia</taxon>
        <taxon>Eutheria</taxon>
        <taxon>Laurasiatheria</taxon>
        <taxon>Artiodactyla</taxon>
        <taxon>Ruminantia</taxon>
        <taxon>Pecora</taxon>
        <taxon>Bovidae</taxon>
        <taxon>Bovinae</taxon>
        <taxon>Bos</taxon>
    </lineage>
</organism>
<proteinExistence type="evidence at transcript level"/>
<evidence type="ECO:0000250" key="1"/>
<evidence type="ECO:0000250" key="2">
    <source>
        <dbReference type="UniProtKB" id="P36873"/>
    </source>
</evidence>
<evidence type="ECO:0000250" key="3">
    <source>
        <dbReference type="UniProtKB" id="P62136"/>
    </source>
</evidence>
<evidence type="ECO:0000250" key="4">
    <source>
        <dbReference type="UniProtKB" id="P62137"/>
    </source>
</evidence>
<evidence type="ECO:0000250" key="5">
    <source>
        <dbReference type="UniProtKB" id="P62139"/>
    </source>
</evidence>
<evidence type="ECO:0000256" key="6">
    <source>
        <dbReference type="SAM" id="MobiDB-lite"/>
    </source>
</evidence>
<evidence type="ECO:0000305" key="7"/>
<keyword id="KW-0007">Acetylation</keyword>
<keyword id="KW-0090">Biological rhythms</keyword>
<keyword id="KW-0119">Carbohydrate metabolism</keyword>
<keyword id="KW-0131">Cell cycle</keyword>
<keyword id="KW-0132">Cell division</keyword>
<keyword id="KW-0963">Cytoplasm</keyword>
<keyword id="KW-0321">Glycogen metabolism</keyword>
<keyword id="KW-0378">Hydrolase</keyword>
<keyword id="KW-0464">Manganese</keyword>
<keyword id="KW-0479">Metal-binding</keyword>
<keyword id="KW-0539">Nucleus</keyword>
<keyword id="KW-0597">Phosphoprotein</keyword>
<keyword id="KW-0904">Protein phosphatase</keyword>
<keyword id="KW-1185">Reference proteome</keyword>
<feature type="initiator methionine" description="Removed" evidence="3">
    <location>
        <position position="1"/>
    </location>
</feature>
<feature type="chain" id="PRO_0000240131" description="Serine/threonine-protein phosphatase PP1-alpha catalytic subunit">
    <location>
        <begin position="2"/>
        <end position="330"/>
    </location>
</feature>
<feature type="region of interest" description="Disordered" evidence="6">
    <location>
        <begin position="306"/>
        <end position="330"/>
    </location>
</feature>
<feature type="active site" description="Proton donor" evidence="2">
    <location>
        <position position="125"/>
    </location>
</feature>
<feature type="binding site" evidence="3">
    <location>
        <position position="64"/>
    </location>
    <ligand>
        <name>Mn(2+)</name>
        <dbReference type="ChEBI" id="CHEBI:29035"/>
        <label>1</label>
    </ligand>
</feature>
<feature type="binding site" evidence="3">
    <location>
        <position position="64"/>
    </location>
    <ligand>
        <name>Mn(2+)</name>
        <dbReference type="ChEBI" id="CHEBI:29035"/>
        <label>2</label>
    </ligand>
</feature>
<feature type="binding site" evidence="3">
    <location>
        <position position="66"/>
    </location>
    <ligand>
        <name>Mn(2+)</name>
        <dbReference type="ChEBI" id="CHEBI:29035"/>
        <label>1</label>
    </ligand>
</feature>
<feature type="binding site" evidence="3">
    <location>
        <position position="92"/>
    </location>
    <ligand>
        <name>Mn(2+)</name>
        <dbReference type="ChEBI" id="CHEBI:29035"/>
        <label>1</label>
    </ligand>
</feature>
<feature type="binding site" evidence="3">
    <location>
        <position position="92"/>
    </location>
    <ligand>
        <name>Mn(2+)</name>
        <dbReference type="ChEBI" id="CHEBI:29035"/>
        <label>2</label>
    </ligand>
</feature>
<feature type="binding site" evidence="3">
    <location>
        <position position="124"/>
    </location>
    <ligand>
        <name>Mn(2+)</name>
        <dbReference type="ChEBI" id="CHEBI:29035"/>
        <label>2</label>
    </ligand>
</feature>
<feature type="binding site" evidence="3">
    <location>
        <position position="173"/>
    </location>
    <ligand>
        <name>Mn(2+)</name>
        <dbReference type="ChEBI" id="CHEBI:29035"/>
        <label>2</label>
    </ligand>
</feature>
<feature type="binding site" evidence="3">
    <location>
        <position position="248"/>
    </location>
    <ligand>
        <name>Mn(2+)</name>
        <dbReference type="ChEBI" id="CHEBI:29035"/>
        <label>2</label>
    </ligand>
</feature>
<feature type="modified residue" description="N-acetylserine" evidence="3">
    <location>
        <position position="2"/>
    </location>
</feature>
<feature type="modified residue" description="Phosphoserine" evidence="3">
    <location>
        <position position="2"/>
    </location>
</feature>
<feature type="modified residue" description="Phosphoserine" evidence="3">
    <location>
        <position position="22"/>
    </location>
</feature>
<feature type="modified residue" description="N6-acetyllysine" evidence="4">
    <location>
        <position position="305"/>
    </location>
</feature>
<feature type="modified residue" description="Phosphotyrosine" evidence="4">
    <location>
        <position position="306"/>
    </location>
</feature>
<feature type="modified residue" description="Phosphothreonine" evidence="3">
    <location>
        <position position="320"/>
    </location>
</feature>
<feature type="modified residue" description="Phosphoserine" evidence="3">
    <location>
        <position position="325"/>
    </location>
</feature>
<gene>
    <name type="primary">PPP1CA</name>
</gene>
<sequence>MSDSEKLNLDSIIGRLLEVQGSRPGKNVQLTENEIRGLCLKSREIFLSQPILLELEAPLKICGDIHGQYYDLLRLFEYGGFPPESNYLFLGDYVDRGKQSLETICLLLAYKIKYPENFFLLRGNHECASINRIYGFYDECKRRYNIKLWKTFTDCFNCLPIAAIVDEKIFCCHGGLSPDLQSMEQIRRIMRPTDVPDQGLLCDLLWSDPDKDVQGWGENDRGVSFTFGAEVVAKFLHKHDLDLICRAHQVVEDGYEFFAKRQLVTLFSAPNYCGEFDNAGAMMSVDETLMCSFQILKPADKNKGKYGQFSGLNPGGRPITPPRNSAKAKK</sequence>
<accession>Q3T0E7</accession>
<comment type="function">
    <text evidence="3 4">Protein phosphatase that associates with over 200 regulatory proteins to form highly specific holoenzymes which dephosphorylate hundreds of biological targets. Protein phosphatase 1 (PP1) is essential for cell division, transcription elongation, and participates in the regulation of glycogen metabolism, muscle contractility and protein synthesis. Involved in regulation of ionic conductances and long-term synaptic plasticity. May play an important role in dephosphorylating substrates such as the postsynaptic density-associated Ca(2+)/calmodulin dependent protein kinase II. Catalytic component of the PNUTS-PP1 protein phosphatase complex, a protein phosphatase 1 (PP1) complex that promotes RNA polymerase II transcription pause-release, allowing transcription elongation: the PNUTS-PP1 complex mediates the release of RNA polymerase II from promoter-proximal region of genes by catalyzing dephosphorylation of proteins involved in transcription, such as AFF4, CDK9, MEPCE, INTS12, NCBP1, POLR2M/GDOWN1 and SUPT6H. The PNUTS-PP1 complex also regulates transcription termination by mediating dephosphorylation of SUPT5H in termination zones downstream of poly(A) sites, thereby promoting deceleration of RNA polymerase II transcription. PNUTS-PP1 complex is also involved in the response to replication stress by mediating dephosphorylation of POLR2A at 'Ser-5' of the CTD, promoting RNA polymerase II degradation. PNUTS-PP1 also plays a role in the control of chromatin structure and cell cycle progression during the transition from mitosis into interphase. Regulates NEK2 function in terms of kinase activity and centrosome number and splitting, both in the presence and absence of radiation-induced DNA damage (By similarity). Regulator of neural tube and optic fissure closure, and enteric neural crest cell (ENCCs) migration during development (By similarity). In balance with CSNK1D and CSNK1E, determines the circadian period length, through the regulation of the speed and rhythmicity of PER1 and PER2 phosphorylation. May dephosphorylate CSNK1D and CSNK1E. Dephosphorylates the 'Ser-418' residue of FOXP3 in regulatory T-cells (Treg) from patients with rheumatoid arthritis, thereby inactivating FOXP3 and rendering Treg cells functionally defective. Dephosphorylates CENPA. Dephosphorylates the 'Ser-139' residue of ATG16L1 causing dissociation of ATG12-ATG5-ATG16L1 complex, thereby inhibiting autophagy. Together with PPP1CC (PP1-gamma subunit), dephosphorylates IFIH1/MDA5 and RIG-I leading to their activation and a functional innate immune response. Core component of the SHOC2-MRAS-PP1c (SMP) holophosphatase complex that regulates the MAPK pathway activation. The SMP complex specifically dephosphorylates the inhibitory phosphorylation at 'Ser-259' of RAF1 kinase, 'Ser-365' of BRAF kinase and 'Ser-214' of ARAF kinase, stimulating their kinase activities. The SMP complex enhances the dephosphorylation activity and substrate specificity of PP1c (By similarity).</text>
</comment>
<comment type="catalytic activity">
    <reaction evidence="3">
        <text>O-phospho-L-seryl-[protein] + H2O = L-seryl-[protein] + phosphate</text>
        <dbReference type="Rhea" id="RHEA:20629"/>
        <dbReference type="Rhea" id="RHEA-COMP:9863"/>
        <dbReference type="Rhea" id="RHEA-COMP:11604"/>
        <dbReference type="ChEBI" id="CHEBI:15377"/>
        <dbReference type="ChEBI" id="CHEBI:29999"/>
        <dbReference type="ChEBI" id="CHEBI:43474"/>
        <dbReference type="ChEBI" id="CHEBI:83421"/>
        <dbReference type="EC" id="3.1.3.16"/>
    </reaction>
</comment>
<comment type="catalytic activity">
    <reaction evidence="3">
        <text>O-phospho-L-threonyl-[protein] + H2O = L-threonyl-[protein] + phosphate</text>
        <dbReference type="Rhea" id="RHEA:47004"/>
        <dbReference type="Rhea" id="RHEA-COMP:11060"/>
        <dbReference type="Rhea" id="RHEA-COMP:11605"/>
        <dbReference type="ChEBI" id="CHEBI:15377"/>
        <dbReference type="ChEBI" id="CHEBI:30013"/>
        <dbReference type="ChEBI" id="CHEBI:43474"/>
        <dbReference type="ChEBI" id="CHEBI:61977"/>
        <dbReference type="EC" id="3.1.3.16"/>
    </reaction>
</comment>
<comment type="cofactor">
    <cofactor evidence="1">
        <name>Mn(2+)</name>
        <dbReference type="ChEBI" id="CHEBI:29035"/>
    </cofactor>
    <text evidence="1">Binds 2 manganese ions per subunit.</text>
</comment>
<comment type="subunit">
    <text evidence="3 4 5">PP1 comprises a catalytic subunit, PPP1CA, PPP1CB or PPP1CC, which is folded into its native form by inhibitor 2 and glycogen synthetase kinase 3, and then complexed to one or several targeting or regulatory subunits. PPP1R12A, PPP1R12B and PPP1R12C mediate binding to myosin. PPP1R3A (in skeletal muscle), PPP1R3B (in liver), PPP1R3C, PPP1R3D and PPP1R3F (in brain) mediate binding to glycogen. Interacts with PPP1R15A and PPP1R15B; the interactions mediate binding to EIF2S1. Part of a complex containing PPP1R15B, PP1 and NCK1/2. Interacts with PPP1R9A, PPP1R9B and PPP1R7. Interacts with YLPM1. Forms a complex with ILF2, ILF3, YLPM1, KHDRBS1, RBMX and NCOA5. Interacts with NOM1 and PPP1R8. Interacts with PPP1R16B. Interacts with RPSA only in the presence of PPP1R16B. Component of the PNUTS-PP1P phosphatase complex, composed of PPP1R10/PNUTS, TOX4, WDR82, and PPP1CA or PPP1CB or PPP1CC. Interacts with PPP1R10/PNUTS and PPP1R8. Interacts with WDR82 in the presence of PPP1R10/PNUTS. Interacts with PPP1R39. transition from mitosis into interphase. Interacts with TRIM28; the interaction dephosphorylates TRIM28 on 'Ser-824' and forms a complex at the p21 promoter site. Interacts with NEK2. Interacts with PHACTR4; which acts as an activator of PP1 activity. Interacts with FER; this promotes phosphorylation at Thr-320. Interacts with BTBD10. Interacts with KCTD20. Interacts with FOXP3. Interacts with CENPA. Interacts with ATG16L1. Found in a complex with PPP1CA, PPP1CC, SHC1 and PEAK1. Interacts with tensin TNS1. Interacts with SAXO4, PPP1R21, PPP1R26, PPP1R27, PPP1R35, PPP1R36, PPP1R37, SH3RF2, ELFN1 and ELFN2. Interacts with TPRN; the interaction results in inhibition of PPC1A phosphatase activity. Interacts with SKA1 (via C-terminus); the interaction is direct and required for the recruitment of PP1 to the kinetochore (By similarity). Interacts with the KNL1 complex subunit KNL1; the interaction is direct and mutually exclusive with KNL1 binding to microtubules (By similarity). Component of the SHOC2-MRAS-PP1c (SMP) complex consisting of SHOC2, GTP-bound M-Ras/MRAS and the catalytic subunit of protein phosphatase 1 (either PPP1CA, PPP1CB or PPP1CC) (By similarity). SHOC2 and PP1c preferably bind M-Ras/MRAS, but they also bind K-Ras/KRAS, N-Ras/NRAS and H-Ras/HRAS; these interactions are GTP-dependent and both SHOC2 and PP1c are required to form a stable complex (By similarity). Interacts with SHOC2 in the absence of Ras GTPases (By similarity).</text>
</comment>
<comment type="subcellular location">
    <subcellularLocation>
        <location evidence="3">Cytoplasm</location>
    </subcellularLocation>
    <subcellularLocation>
        <location evidence="3">Nucleus</location>
    </subcellularLocation>
    <subcellularLocation>
        <location evidence="3">Nucleus</location>
        <location evidence="3">Nucleoplasm</location>
    </subcellularLocation>
    <subcellularLocation>
        <location evidence="3">Nucleus</location>
        <location evidence="3">Nucleolus</location>
    </subcellularLocation>
    <text evidence="3">Primarily nuclear and largely excluded from the nucleolus. Highly mobile in cells and can be relocalized through interaction with targeting subunits. NOM1 plays a role in targeting this protein to the nucleolus. In the presence of PPP1R8 relocalizes from the nucleus to nuclear speckles.</text>
</comment>
<comment type="PTM">
    <text evidence="3">Phosphorylated. Dephosphorylated at Thr-320 in the presence of ionizing radiation.</text>
</comment>
<comment type="similarity">
    <text evidence="7">Belongs to the PPP phosphatase family. PP-1 subfamily.</text>
</comment>
<comment type="online information" name="Protein Spotlight">
    <link uri="https://www.proteinspotlight.org/back_issues/032"/>
    <text>The things we forget - Issue 32 of March 2003</text>
</comment>
<reference key="1">
    <citation type="submission" date="2005-08" db="EMBL/GenBank/DDBJ databases">
        <authorList>
            <consortium name="NIH - Mammalian Gene Collection (MGC) project"/>
        </authorList>
    </citation>
    <scope>NUCLEOTIDE SEQUENCE [LARGE SCALE MRNA]</scope>
    <source>
        <strain>Crossbred X Angus</strain>
        <tissue>Ileum</tissue>
    </source>
</reference>